<feature type="chain" id="PRO_0000434476" description="Orange carotenoid-binding domain-containing protein">
    <location>
        <begin position="1"/>
        <end position="171"/>
    </location>
</feature>
<feature type="domain" description="OCP N-terminal" evidence="3">
    <location>
        <begin position="21"/>
        <end position="171"/>
    </location>
</feature>
<feature type="strand" evidence="5">
    <location>
        <begin position="15"/>
        <end position="18"/>
    </location>
</feature>
<feature type="helix" evidence="5">
    <location>
        <begin position="23"/>
        <end position="32"/>
    </location>
</feature>
<feature type="helix" evidence="5">
    <location>
        <begin position="36"/>
        <end position="50"/>
    </location>
</feature>
<feature type="turn" evidence="5">
    <location>
        <begin position="51"/>
        <end position="53"/>
    </location>
</feature>
<feature type="turn" evidence="5">
    <location>
        <begin position="56"/>
        <end position="58"/>
    </location>
</feature>
<feature type="strand" evidence="5">
    <location>
        <begin position="61"/>
        <end position="64"/>
    </location>
</feature>
<feature type="helix" evidence="5">
    <location>
        <begin position="65"/>
        <end position="76"/>
    </location>
</feature>
<feature type="helix" evidence="5">
    <location>
        <begin position="79"/>
        <end position="91"/>
    </location>
</feature>
<feature type="helix" evidence="5">
    <location>
        <begin position="96"/>
        <end position="102"/>
    </location>
</feature>
<feature type="helix" evidence="5">
    <location>
        <begin position="106"/>
        <end position="121"/>
    </location>
</feature>
<feature type="helix" evidence="5">
    <location>
        <begin position="136"/>
        <end position="147"/>
    </location>
</feature>
<feature type="helix" evidence="5">
    <location>
        <begin position="150"/>
        <end position="162"/>
    </location>
</feature>
<comment type="function">
    <text evidence="1">Might act as a photo-protectant, protecting against damage induced by excess light via a process known as non-photochemical quenching (NPQ).</text>
</comment>
<comment type="cofactor">
    <cofactor evidence="1">
        <name>3'-hydroxyechinenone</name>
        <dbReference type="ChEBI" id="CHEBI:80214"/>
    </cofactor>
</comment>
<comment type="subcellular location">
    <subcellularLocation>
        <location evidence="2">Cellular thylakoid membrane</location>
    </subcellularLocation>
    <text evidence="1">Associated with the phycobilisome.</text>
</comment>
<comment type="similarity">
    <text evidence="3 4">Belongs to the orange carotenoid-binding protein family.</text>
</comment>
<comment type="sequence caution" evidence="4">
    <conflict type="erroneous initiation">
        <sequence resource="EMBL-CDS" id="BAB76640"/>
    </conflict>
    <text>Truncated N-terminus.</text>
</comment>
<dbReference type="EMBL" id="BA000019">
    <property type="protein sequence ID" value="BAB76640.1"/>
    <property type="status" value="ALT_INIT"/>
    <property type="molecule type" value="Genomic_DNA"/>
</dbReference>
<dbReference type="PIR" id="AE2423">
    <property type="entry name" value="AE2423"/>
</dbReference>
<dbReference type="RefSeq" id="WP_044522402.1">
    <property type="nucleotide sequence ID" value="NZ_RSCN01000018.1"/>
</dbReference>
<dbReference type="PDB" id="8QX5">
    <property type="method" value="X-ray"/>
    <property type="resolution" value="1.90 A"/>
    <property type="chains" value="A/B=2-170"/>
</dbReference>
<dbReference type="PDBsum" id="8QX5"/>
<dbReference type="SMR" id="Q8YMJ2"/>
<dbReference type="STRING" id="103690.gene:10496996"/>
<dbReference type="KEGG" id="ana:all4941"/>
<dbReference type="eggNOG" id="COG3631">
    <property type="taxonomic scope" value="Bacteria"/>
</dbReference>
<dbReference type="OrthoDB" id="511607at2"/>
<dbReference type="Proteomes" id="UP000002483">
    <property type="component" value="Chromosome"/>
</dbReference>
<dbReference type="GO" id="GO:0030089">
    <property type="term" value="C:phycobilisome"/>
    <property type="evidence" value="ECO:0007669"/>
    <property type="project" value="UniProtKB-KW"/>
</dbReference>
<dbReference type="GO" id="GO:0031676">
    <property type="term" value="C:plasma membrane-derived thylakoid membrane"/>
    <property type="evidence" value="ECO:0007669"/>
    <property type="project" value="UniProtKB-SubCell"/>
</dbReference>
<dbReference type="GO" id="GO:0031404">
    <property type="term" value="F:chloride ion binding"/>
    <property type="evidence" value="ECO:0007669"/>
    <property type="project" value="InterPro"/>
</dbReference>
<dbReference type="GO" id="GO:0016037">
    <property type="term" value="P:light absorption"/>
    <property type="evidence" value="ECO:0007669"/>
    <property type="project" value="InterPro"/>
</dbReference>
<dbReference type="Gene3D" id="1.10.2090.10">
    <property type="entry name" value="Orange carotenoid-binding protein, N-terminal domain"/>
    <property type="match status" value="1"/>
</dbReference>
<dbReference type="InterPro" id="IPR015233">
    <property type="entry name" value="Orange_carotenoid-bd_N"/>
</dbReference>
<dbReference type="InterPro" id="IPR036917">
    <property type="entry name" value="Orange_carotenoid-bd_N_sf"/>
</dbReference>
<dbReference type="Pfam" id="PF09150">
    <property type="entry name" value="Carot_N"/>
    <property type="match status" value="1"/>
</dbReference>
<dbReference type="SUPFAM" id="SSF81930">
    <property type="entry name" value="Orange carotenoid protein, N-terminal domain"/>
    <property type="match status" value="1"/>
</dbReference>
<dbReference type="PROSITE" id="PS51773">
    <property type="entry name" value="OCP_N"/>
    <property type="match status" value="1"/>
</dbReference>
<gene>
    <name type="ordered locus">all4941</name>
</gene>
<protein>
    <recommendedName>
        <fullName evidence="4">Orange carotenoid-binding domain-containing protein</fullName>
    </recommendedName>
</protein>
<name>CROTO_NOSS1</name>
<reference key="1">
    <citation type="journal article" date="2001" name="DNA Res.">
        <title>Complete genomic sequence of the filamentous nitrogen-fixing cyanobacterium Anabaena sp. strain PCC 7120.</title>
        <authorList>
            <person name="Kaneko T."/>
            <person name="Nakamura Y."/>
            <person name="Wolk C.P."/>
            <person name="Kuritz T."/>
            <person name="Sasamoto S."/>
            <person name="Watanabe A."/>
            <person name="Iriguchi M."/>
            <person name="Ishikawa A."/>
            <person name="Kawashima K."/>
            <person name="Kimura T."/>
            <person name="Kishida Y."/>
            <person name="Kohara M."/>
            <person name="Matsumoto M."/>
            <person name="Matsuno A."/>
            <person name="Muraki A."/>
            <person name="Nakazaki N."/>
            <person name="Shimpo S."/>
            <person name="Sugimoto M."/>
            <person name="Takazawa M."/>
            <person name="Yamada M."/>
            <person name="Yasuda M."/>
            <person name="Tabata S."/>
        </authorList>
    </citation>
    <scope>NUCLEOTIDE SEQUENCE [LARGE SCALE GENOMIC DNA]</scope>
    <source>
        <strain>PCC 7120 / SAG 25.82 / UTEX 2576</strain>
    </source>
</reference>
<accession>Q8YMJ2</accession>
<organism>
    <name type="scientific">Nostoc sp. (strain PCC 7120 / SAG 25.82 / UTEX 2576)</name>
    <dbReference type="NCBI Taxonomy" id="103690"/>
    <lineage>
        <taxon>Bacteria</taxon>
        <taxon>Bacillati</taxon>
        <taxon>Cyanobacteriota</taxon>
        <taxon>Cyanophyceae</taxon>
        <taxon>Nostocales</taxon>
        <taxon>Nostocaceae</taxon>
        <taxon>Nostoc</taxon>
    </lineage>
</organism>
<sequence>MTFTSDSASTRFSQAFGIQTGDAVASTITVFQALSIDDQLAVLWYAYTEMGRSITPAATGAARLQLAEGLLNQIKQMSHAEQLQVMRDLAAKNNTQVSRSYGILSNNTKLAFWYELSELMVKGFVVPVPTDYKISRDGSQVLEALKGLDFGQQITVLRKVVADMGVDPLAD</sequence>
<evidence type="ECO:0000250" key="1">
    <source>
        <dbReference type="UniProtKB" id="P74102"/>
    </source>
</evidence>
<evidence type="ECO:0000250" key="2">
    <source>
        <dbReference type="UniProtKB" id="P83689"/>
    </source>
</evidence>
<evidence type="ECO:0000255" key="3">
    <source>
        <dbReference type="PROSITE-ProRule" id="PRU01109"/>
    </source>
</evidence>
<evidence type="ECO:0000305" key="4"/>
<evidence type="ECO:0007829" key="5">
    <source>
        <dbReference type="PDB" id="8QX5"/>
    </source>
</evidence>
<keyword id="KW-0002">3D-structure</keyword>
<keyword id="KW-0042">Antenna complex</keyword>
<keyword id="KW-0157">Chromophore</keyword>
<keyword id="KW-0472">Membrane</keyword>
<keyword id="KW-0605">Phycobilisome</keyword>
<keyword id="KW-1185">Reference proteome</keyword>
<keyword id="KW-0793">Thylakoid</keyword>
<proteinExistence type="evidence at protein level"/>